<organism>
    <name type="scientific">Medicago truncatula</name>
    <name type="common">Barrel medic</name>
    <name type="synonym">Medicago tribuloides</name>
    <dbReference type="NCBI Taxonomy" id="3880"/>
    <lineage>
        <taxon>Eukaryota</taxon>
        <taxon>Viridiplantae</taxon>
        <taxon>Streptophyta</taxon>
        <taxon>Embryophyta</taxon>
        <taxon>Tracheophyta</taxon>
        <taxon>Spermatophyta</taxon>
        <taxon>Magnoliopsida</taxon>
        <taxon>eudicotyledons</taxon>
        <taxon>Gunneridae</taxon>
        <taxon>Pentapetalae</taxon>
        <taxon>rosids</taxon>
        <taxon>fabids</taxon>
        <taxon>Fabales</taxon>
        <taxon>Fabaceae</taxon>
        <taxon>Papilionoideae</taxon>
        <taxon>50 kb inversion clade</taxon>
        <taxon>NPAAA clade</taxon>
        <taxon>Hologalegina</taxon>
        <taxon>IRL clade</taxon>
        <taxon>Trifolieae</taxon>
        <taxon>Medicago</taxon>
    </lineage>
</organism>
<keyword id="KW-1003">Cell membrane</keyword>
<keyword id="KW-1015">Disulfide bond</keyword>
<keyword id="KW-0325">Glycoprotein</keyword>
<keyword id="KW-0336">GPI-anchor</keyword>
<keyword id="KW-0449">Lipoprotein</keyword>
<keyword id="KW-0472">Membrane</keyword>
<keyword id="KW-0536">Nodulation</keyword>
<keyword id="KW-0732">Signal</keyword>
<proteinExistence type="inferred from homology"/>
<dbReference type="EMBL" id="X99467">
    <property type="protein sequence ID" value="CAA67830.1"/>
    <property type="molecule type" value="Genomic_DNA"/>
</dbReference>
<dbReference type="SMR" id="P93329"/>
<dbReference type="PaxDb" id="3880-AES92509"/>
<dbReference type="eggNOG" id="ENOG502SECN">
    <property type="taxonomic scope" value="Eukaryota"/>
</dbReference>
<dbReference type="ExpressionAtlas" id="P93329">
    <property type="expression patterns" value="differential"/>
</dbReference>
<dbReference type="GO" id="GO:0005886">
    <property type="term" value="C:plasma membrane"/>
    <property type="evidence" value="ECO:0007669"/>
    <property type="project" value="UniProtKB-SubCell"/>
</dbReference>
<dbReference type="GO" id="GO:0098552">
    <property type="term" value="C:side of membrane"/>
    <property type="evidence" value="ECO:0007669"/>
    <property type="project" value="UniProtKB-KW"/>
</dbReference>
<dbReference type="GO" id="GO:0009055">
    <property type="term" value="F:electron transfer activity"/>
    <property type="evidence" value="ECO:0007669"/>
    <property type="project" value="InterPro"/>
</dbReference>
<dbReference type="GO" id="GO:0009877">
    <property type="term" value="P:nodulation"/>
    <property type="evidence" value="ECO:0007669"/>
    <property type="project" value="UniProtKB-KW"/>
</dbReference>
<dbReference type="CDD" id="cd04216">
    <property type="entry name" value="Phytocyanin"/>
    <property type="match status" value="1"/>
</dbReference>
<dbReference type="FunFam" id="2.60.40.420:FF:000034">
    <property type="entry name" value="Cupredoxin superfamily protein"/>
    <property type="match status" value="1"/>
</dbReference>
<dbReference type="Gene3D" id="2.60.40.420">
    <property type="entry name" value="Cupredoxins - blue copper proteins"/>
    <property type="match status" value="1"/>
</dbReference>
<dbReference type="InterPro" id="IPR008972">
    <property type="entry name" value="Cupredoxin"/>
</dbReference>
<dbReference type="InterPro" id="IPR039391">
    <property type="entry name" value="Phytocyanin-like"/>
</dbReference>
<dbReference type="InterPro" id="IPR003245">
    <property type="entry name" value="Phytocyanin_dom"/>
</dbReference>
<dbReference type="PANTHER" id="PTHR33021">
    <property type="entry name" value="BLUE COPPER PROTEIN"/>
    <property type="match status" value="1"/>
</dbReference>
<dbReference type="PANTHER" id="PTHR33021:SF519">
    <property type="entry name" value="EARLY NODULIN-LIKE PROTEIN 10"/>
    <property type="match status" value="1"/>
</dbReference>
<dbReference type="Pfam" id="PF02298">
    <property type="entry name" value="Cu_bind_like"/>
    <property type="match status" value="1"/>
</dbReference>
<dbReference type="PRINTS" id="PR01217">
    <property type="entry name" value="PRICHEXTENSN"/>
</dbReference>
<dbReference type="SUPFAM" id="SSF49503">
    <property type="entry name" value="Cupredoxins"/>
    <property type="match status" value="1"/>
</dbReference>
<dbReference type="PROSITE" id="PS51485">
    <property type="entry name" value="PHYTOCYANIN"/>
    <property type="match status" value="1"/>
</dbReference>
<gene>
    <name evidence="5" type="primary">ENOD20</name>
</gene>
<reference key="1">
    <citation type="journal article" date="1998" name="Plant Mol. Biol.">
        <title>MtENOD16 and 20 are members of a family of phytocyanin-related early nodulins.</title>
        <authorList>
            <person name="Greene E.A."/>
            <person name="Erard M."/>
            <person name="Dedieu A."/>
            <person name="Barker D.G."/>
        </authorList>
    </citation>
    <scope>NUCLEOTIDE SEQUENCE [GENOMIC DNA]</scope>
    <source>
        <strain>cv. Jemalong</strain>
    </source>
</reference>
<comment type="function">
    <text evidence="6">May act as a carbohydrate transporter.</text>
</comment>
<comment type="subcellular location">
    <subcellularLocation>
        <location evidence="1">Cell membrane</location>
        <topology evidence="1">Lipid-anchor</topology>
        <topology evidence="1">GPI-anchor</topology>
    </subcellularLocation>
</comment>
<comment type="similarity">
    <text evidence="6">Belongs to the early nodulin-like (ENODL) family.</text>
</comment>
<sequence>MSSSSPILLMFIFSIWMLISYSESTDYLVGDSENSWKFPLPTRHALTRWASNYQFIVGDTITFQYNNKTESVHEVEEEDYDRCGIRGEHVDHYDGNTMVVLKKTGIHHFISGKKRHCRLGLKLAVVVMVAPVLSSPPPPPSPPTPRSSTPIPHPPRRSLPSPPSPSPSPSPSPSPSPSPRSTPIPHPRKRSPASPSPSPSLSKSPSPSESPSLAPSPSDSVASLAPSSSPSDESPSPAPSPSSSGSKGGGAGHGFLEVSIAMMMFLIF</sequence>
<protein>
    <recommendedName>
        <fullName evidence="5">Early nodulin-20</fullName>
        <shortName evidence="5">N-20</shortName>
    </recommendedName>
</protein>
<feature type="signal peptide" evidence="1">
    <location>
        <begin position="1"/>
        <end position="24"/>
    </location>
</feature>
<feature type="chain" id="PRO_0000002877" description="Early nodulin-20">
    <location>
        <begin position="25"/>
        <end position="243"/>
    </location>
</feature>
<feature type="propeptide" id="PRO_0000457728" description="Removed in mature form" evidence="1">
    <location>
        <begin position="244"/>
        <end position="268"/>
    </location>
</feature>
<feature type="domain" description="Phytocyanin" evidence="3">
    <location>
        <begin position="25"/>
        <end position="129"/>
    </location>
</feature>
<feature type="region of interest" description="Disordered" evidence="4">
    <location>
        <begin position="134"/>
        <end position="253"/>
    </location>
</feature>
<feature type="compositionally biased region" description="Pro residues" evidence="4">
    <location>
        <begin position="134"/>
        <end position="145"/>
    </location>
</feature>
<feature type="compositionally biased region" description="Pro residues" evidence="4">
    <location>
        <begin position="160"/>
        <end position="185"/>
    </location>
</feature>
<feature type="compositionally biased region" description="Low complexity" evidence="4">
    <location>
        <begin position="199"/>
        <end position="235"/>
    </location>
</feature>
<feature type="lipid moiety-binding region" description="GPI-anchor amidated serine" evidence="1">
    <location>
        <position position="243"/>
    </location>
</feature>
<feature type="glycosylation site" description="N-linked (GlcNAc...) asparagine" evidence="2">
    <location>
        <position position="67"/>
    </location>
</feature>
<feature type="disulfide bond" evidence="3">
    <location>
        <begin position="83"/>
        <end position="117"/>
    </location>
</feature>
<evidence type="ECO:0000255" key="1"/>
<evidence type="ECO:0000255" key="2">
    <source>
        <dbReference type="PROSITE-ProRule" id="PRU00498"/>
    </source>
</evidence>
<evidence type="ECO:0000255" key="3">
    <source>
        <dbReference type="PROSITE-ProRule" id="PRU00818"/>
    </source>
</evidence>
<evidence type="ECO:0000256" key="4">
    <source>
        <dbReference type="SAM" id="MobiDB-lite"/>
    </source>
</evidence>
<evidence type="ECO:0000303" key="5">
    <source>
    </source>
</evidence>
<evidence type="ECO:0000305" key="6"/>
<name>NO20_MEDTR</name>
<accession>P93329</accession>